<protein>
    <recommendedName>
        <fullName>Cytochrome c oxidase subunit 2</fullName>
        <ecNumber>7.1.1.9</ecNumber>
    </recommendedName>
    <alternativeName>
        <fullName>Cytochrome c oxidase polypeptide II</fullName>
    </alternativeName>
</protein>
<geneLocation type="mitochondrion"/>
<accession>Q37548</accession>
<reference key="1">
    <citation type="submission" date="1996-06" db="EMBL/GenBank/DDBJ databases">
        <authorList>
            <person name="Adkins R.M."/>
            <person name="Honeycutt R.L."/>
            <person name="Janecek L.L."/>
            <person name="Disotell T."/>
        </authorList>
    </citation>
    <scope>NUCLEOTIDE SEQUENCE [GENOMIC DNA]</scope>
</reference>
<keyword id="KW-0186">Copper</keyword>
<keyword id="KW-0249">Electron transport</keyword>
<keyword id="KW-0460">Magnesium</keyword>
<keyword id="KW-0472">Membrane</keyword>
<keyword id="KW-0479">Metal-binding</keyword>
<keyword id="KW-0496">Mitochondrion</keyword>
<keyword id="KW-0999">Mitochondrion inner membrane</keyword>
<keyword id="KW-0597">Phosphoprotein</keyword>
<keyword id="KW-0679">Respiratory chain</keyword>
<keyword id="KW-1278">Translocase</keyword>
<keyword id="KW-0812">Transmembrane</keyword>
<keyword id="KW-1133">Transmembrane helix</keyword>
<keyword id="KW-0813">Transport</keyword>
<evidence type="ECO:0000250" key="1">
    <source>
        <dbReference type="UniProtKB" id="P00403"/>
    </source>
</evidence>
<evidence type="ECO:0000250" key="2">
    <source>
        <dbReference type="UniProtKB" id="P00406"/>
    </source>
</evidence>
<evidence type="ECO:0000250" key="3">
    <source>
        <dbReference type="UniProtKB" id="P00410"/>
    </source>
</evidence>
<evidence type="ECO:0000250" key="4">
    <source>
        <dbReference type="UniProtKB" id="P68530"/>
    </source>
</evidence>
<evidence type="ECO:0000305" key="5"/>
<proteinExistence type="inferred from homology"/>
<feature type="chain" id="PRO_0000183625" description="Cytochrome c oxidase subunit 2">
    <location>
        <begin position="1"/>
        <end position="227"/>
    </location>
</feature>
<feature type="topological domain" description="Mitochondrial intermembrane" evidence="4">
    <location>
        <begin position="1"/>
        <end position="14"/>
    </location>
</feature>
<feature type="transmembrane region" description="Helical; Name=I" evidence="4">
    <location>
        <begin position="15"/>
        <end position="45"/>
    </location>
</feature>
<feature type="topological domain" description="Mitochondrial matrix" evidence="4">
    <location>
        <begin position="46"/>
        <end position="59"/>
    </location>
</feature>
<feature type="transmembrane region" description="Helical; Name=II" evidence="4">
    <location>
        <begin position="60"/>
        <end position="87"/>
    </location>
</feature>
<feature type="topological domain" description="Mitochondrial intermembrane" evidence="4">
    <location>
        <begin position="88"/>
        <end position="227"/>
    </location>
</feature>
<feature type="binding site" evidence="4">
    <location>
        <position position="161"/>
    </location>
    <ligand>
        <name>Cu cation</name>
        <dbReference type="ChEBI" id="CHEBI:23378"/>
        <label>A1</label>
    </ligand>
</feature>
<feature type="binding site" evidence="4">
    <location>
        <position position="196"/>
    </location>
    <ligand>
        <name>Cu cation</name>
        <dbReference type="ChEBI" id="CHEBI:23378"/>
        <label>A1</label>
    </ligand>
</feature>
<feature type="binding site" evidence="4">
    <location>
        <position position="196"/>
    </location>
    <ligand>
        <name>Cu cation</name>
        <dbReference type="ChEBI" id="CHEBI:23378"/>
        <label>A2</label>
    </ligand>
</feature>
<feature type="binding site" evidence="4">
    <location>
        <position position="198"/>
    </location>
    <ligand>
        <name>Cu cation</name>
        <dbReference type="ChEBI" id="CHEBI:23378"/>
        <label>A2</label>
    </ligand>
</feature>
<feature type="binding site" evidence="4">
    <location>
        <position position="198"/>
    </location>
    <ligand>
        <name>Mg(2+)</name>
        <dbReference type="ChEBI" id="CHEBI:18420"/>
        <note>ligand shared with MT-CO1</note>
    </ligand>
</feature>
<feature type="binding site" evidence="4">
    <location>
        <position position="200"/>
    </location>
    <ligand>
        <name>Cu cation</name>
        <dbReference type="ChEBI" id="CHEBI:23378"/>
        <label>A1</label>
    </ligand>
</feature>
<feature type="binding site" evidence="4">
    <location>
        <position position="200"/>
    </location>
    <ligand>
        <name>Cu cation</name>
        <dbReference type="ChEBI" id="CHEBI:23378"/>
        <label>A2</label>
    </ligand>
</feature>
<feature type="binding site" evidence="4">
    <location>
        <position position="204"/>
    </location>
    <ligand>
        <name>Cu cation</name>
        <dbReference type="ChEBI" id="CHEBI:23378"/>
        <label>A2</label>
    </ligand>
</feature>
<feature type="binding site" evidence="4">
    <location>
        <position position="207"/>
    </location>
    <ligand>
        <name>Cu cation</name>
        <dbReference type="ChEBI" id="CHEBI:23378"/>
        <label>A1</label>
    </ligand>
</feature>
<feature type="modified residue" description="Phosphotyrosine" evidence="2">
    <location>
        <position position="218"/>
    </location>
</feature>
<name>COX2_MACCA</name>
<organism>
    <name type="scientific">Macrotus californicus</name>
    <name type="common">Californian leaf-nosed bat</name>
    <dbReference type="NCBI Taxonomy" id="9419"/>
    <lineage>
        <taxon>Eukaryota</taxon>
        <taxon>Metazoa</taxon>
        <taxon>Chordata</taxon>
        <taxon>Craniata</taxon>
        <taxon>Vertebrata</taxon>
        <taxon>Euteleostomi</taxon>
        <taxon>Mammalia</taxon>
        <taxon>Eutheria</taxon>
        <taxon>Laurasiatheria</taxon>
        <taxon>Chiroptera</taxon>
        <taxon>Yangochiroptera</taxon>
        <taxon>Phyllostomidae</taxon>
        <taxon>Phyllostominae</taxon>
        <taxon>Macrotus</taxon>
    </lineage>
</organism>
<gene>
    <name type="primary">MT-CO2</name>
    <name type="synonym">COII</name>
    <name type="synonym">COX2</name>
    <name type="synonym">COXII</name>
    <name type="synonym">MTCO2</name>
</gene>
<dbReference type="EC" id="7.1.1.9"/>
<dbReference type="EMBL" id="U62579">
    <property type="protein sequence ID" value="AAB05786.1"/>
    <property type="molecule type" value="Genomic_DNA"/>
</dbReference>
<dbReference type="SMR" id="Q37548"/>
<dbReference type="GO" id="GO:0005743">
    <property type="term" value="C:mitochondrial inner membrane"/>
    <property type="evidence" value="ECO:0007669"/>
    <property type="project" value="UniProtKB-SubCell"/>
</dbReference>
<dbReference type="GO" id="GO:0045277">
    <property type="term" value="C:respiratory chain complex IV"/>
    <property type="evidence" value="ECO:0000250"/>
    <property type="project" value="UniProtKB"/>
</dbReference>
<dbReference type="GO" id="GO:0005507">
    <property type="term" value="F:copper ion binding"/>
    <property type="evidence" value="ECO:0007669"/>
    <property type="project" value="InterPro"/>
</dbReference>
<dbReference type="GO" id="GO:0004129">
    <property type="term" value="F:cytochrome-c oxidase activity"/>
    <property type="evidence" value="ECO:0007669"/>
    <property type="project" value="UniProtKB-EC"/>
</dbReference>
<dbReference type="GO" id="GO:0042773">
    <property type="term" value="P:ATP synthesis coupled electron transport"/>
    <property type="evidence" value="ECO:0007669"/>
    <property type="project" value="TreeGrafter"/>
</dbReference>
<dbReference type="CDD" id="cd13912">
    <property type="entry name" value="CcO_II_C"/>
    <property type="match status" value="1"/>
</dbReference>
<dbReference type="FunFam" id="1.10.287.90:FF:000001">
    <property type="entry name" value="Cytochrome c oxidase subunit 2"/>
    <property type="match status" value="1"/>
</dbReference>
<dbReference type="FunFam" id="2.60.40.420:FF:000001">
    <property type="entry name" value="Cytochrome c oxidase subunit 2"/>
    <property type="match status" value="1"/>
</dbReference>
<dbReference type="Gene3D" id="1.10.287.90">
    <property type="match status" value="1"/>
</dbReference>
<dbReference type="Gene3D" id="2.60.40.420">
    <property type="entry name" value="Cupredoxins - blue copper proteins"/>
    <property type="match status" value="1"/>
</dbReference>
<dbReference type="InterPro" id="IPR045187">
    <property type="entry name" value="CcO_II"/>
</dbReference>
<dbReference type="InterPro" id="IPR002429">
    <property type="entry name" value="CcO_II-like_C"/>
</dbReference>
<dbReference type="InterPro" id="IPR034210">
    <property type="entry name" value="CcO_II_C"/>
</dbReference>
<dbReference type="InterPro" id="IPR001505">
    <property type="entry name" value="Copper_CuA"/>
</dbReference>
<dbReference type="InterPro" id="IPR008972">
    <property type="entry name" value="Cupredoxin"/>
</dbReference>
<dbReference type="InterPro" id="IPR014222">
    <property type="entry name" value="Cyt_c_oxidase_su2"/>
</dbReference>
<dbReference type="InterPro" id="IPR011759">
    <property type="entry name" value="Cyt_c_oxidase_su2_TM_dom"/>
</dbReference>
<dbReference type="InterPro" id="IPR036257">
    <property type="entry name" value="Cyt_c_oxidase_su2_TM_sf"/>
</dbReference>
<dbReference type="NCBIfam" id="TIGR02866">
    <property type="entry name" value="CoxB"/>
    <property type="match status" value="1"/>
</dbReference>
<dbReference type="PANTHER" id="PTHR22888:SF9">
    <property type="entry name" value="CYTOCHROME C OXIDASE SUBUNIT 2"/>
    <property type="match status" value="1"/>
</dbReference>
<dbReference type="PANTHER" id="PTHR22888">
    <property type="entry name" value="CYTOCHROME C OXIDASE, SUBUNIT II"/>
    <property type="match status" value="1"/>
</dbReference>
<dbReference type="Pfam" id="PF00116">
    <property type="entry name" value="COX2"/>
    <property type="match status" value="1"/>
</dbReference>
<dbReference type="Pfam" id="PF02790">
    <property type="entry name" value="COX2_TM"/>
    <property type="match status" value="1"/>
</dbReference>
<dbReference type="PRINTS" id="PR01166">
    <property type="entry name" value="CYCOXIDASEII"/>
</dbReference>
<dbReference type="SUPFAM" id="SSF49503">
    <property type="entry name" value="Cupredoxins"/>
    <property type="match status" value="1"/>
</dbReference>
<dbReference type="SUPFAM" id="SSF81464">
    <property type="entry name" value="Cytochrome c oxidase subunit II-like, transmembrane region"/>
    <property type="match status" value="1"/>
</dbReference>
<dbReference type="PROSITE" id="PS00078">
    <property type="entry name" value="COX2"/>
    <property type="match status" value="1"/>
</dbReference>
<dbReference type="PROSITE" id="PS50857">
    <property type="entry name" value="COX2_CUA"/>
    <property type="match status" value="1"/>
</dbReference>
<dbReference type="PROSITE" id="PS50999">
    <property type="entry name" value="COX2_TM"/>
    <property type="match status" value="1"/>
</dbReference>
<sequence>MAYPFQLGFQDATSPIMEELLHFHDHTLMIVFLISSLVLYVISAMLTTNLTHTSTMDAQEVETIWTILPAIILITIALPSLRILYMMDEINNPAMTIKTMGHQWYWSYEYTDYHDLSFDSYMVPTSDLKPGELRLLEVDNRVVLPVEMTIRMLISSEDVLHSWAVPSLGLKTDAIPGRLNQTTLLSIRPGLYYGQCSEICGSNHSFMPIVLEVVPLEYFEKWSVSML</sequence>
<comment type="function">
    <text evidence="3">Component of the cytochrome c oxidase, the last enzyme in the mitochondrial electron transport chain which drives oxidative phosphorylation. The respiratory chain contains 3 multisubunit complexes succinate dehydrogenase (complex II, CII), ubiquinol-cytochrome c oxidoreductase (cytochrome b-c1 complex, complex III, CIII) and cytochrome c oxidase (complex IV, CIV), that cooperate to transfer electrons derived from NADH and succinate to molecular oxygen, creating an electrochemical gradient over the inner membrane that drives transmembrane transport and the ATP synthase. Cytochrome c oxidase is the component of the respiratory chain that catalyzes the reduction of oxygen to water. Electrons originating from reduced cytochrome c in the intermembrane space (IMS) are transferred via the dinuclear copper A center (CU(A)) of subunit 2 and heme A of subunit 1 to the active site in subunit 1, a binuclear center (BNC) formed by heme A3 and copper B (CU(B)). The BNC reduces molecular oxygen to 2 water molecules using 4 electrons from cytochrome c in the IMS and 4 protons from the mitochondrial matrix.</text>
</comment>
<comment type="catalytic activity">
    <reaction evidence="3">
        <text>4 Fe(II)-[cytochrome c] + O2 + 8 H(+)(in) = 4 Fe(III)-[cytochrome c] + 2 H2O + 4 H(+)(out)</text>
        <dbReference type="Rhea" id="RHEA:11436"/>
        <dbReference type="Rhea" id="RHEA-COMP:10350"/>
        <dbReference type="Rhea" id="RHEA-COMP:14399"/>
        <dbReference type="ChEBI" id="CHEBI:15377"/>
        <dbReference type="ChEBI" id="CHEBI:15378"/>
        <dbReference type="ChEBI" id="CHEBI:15379"/>
        <dbReference type="ChEBI" id="CHEBI:29033"/>
        <dbReference type="ChEBI" id="CHEBI:29034"/>
        <dbReference type="EC" id="7.1.1.9"/>
    </reaction>
    <physiologicalReaction direction="left-to-right" evidence="3">
        <dbReference type="Rhea" id="RHEA:11437"/>
    </physiologicalReaction>
</comment>
<comment type="cofactor">
    <cofactor evidence="4">
        <name>Cu cation</name>
        <dbReference type="ChEBI" id="CHEBI:23378"/>
    </cofactor>
    <text evidence="4">Binds a dinuclear copper A center per subunit.</text>
</comment>
<comment type="subunit">
    <text evidence="1 4">Component of the cytochrome c oxidase (complex IV, CIV), a multisubunit enzyme composed of 14 subunits. The complex is composed of a catalytic core of 3 subunits MT-CO1, MT-CO2 and MT-CO3, encoded in the mitochondrial DNA, and 11 supernumerary subunits COX4I, COX5A, COX5B, COX6A, COX6B, COX6C, COX7A, COX7B, COX7C, COX8 and NDUFA4, which are encoded in the nuclear genome. The complex exists as a monomer or a dimer and forms supercomplexes (SCs) in the inner mitochondrial membrane with NADH-ubiquinone oxidoreductase (complex I, CI) and ubiquinol-cytochrome c oxidoreductase (cytochrome b-c1 complex, complex III, CIII), resulting in different assemblies (supercomplex SCI(1)III(2)IV(1) and megacomplex MCI(2)III(2)IV(2)) (By similarity). Found in a complex with TMEM177, COA6, COX18, COX20, SCO1 and SCO2. Interacts with TMEM177 in a COX20-dependent manner. Interacts with COX20. Interacts with COX16 (By similarity).</text>
</comment>
<comment type="subcellular location">
    <subcellularLocation>
        <location evidence="4">Mitochondrion inner membrane</location>
        <topology evidence="4">Multi-pass membrane protein</topology>
    </subcellularLocation>
</comment>
<comment type="similarity">
    <text evidence="5">Belongs to the cytochrome c oxidase subunit 2 family.</text>
</comment>